<protein>
    <recommendedName>
        <fullName>Uncharacterized protein 139L</fullName>
    </recommendedName>
</protein>
<sequence>MKFIKLFTFLVYLFVTLTNVFAFPDGMMCLNLDGSVGGYGCVFRRVESPTTTTKNYCDYYYCEDD</sequence>
<feature type="signal peptide" evidence="1">
    <location>
        <begin position="1"/>
        <end position="22"/>
    </location>
</feature>
<feature type="chain" id="PRO_0000378008" description="Uncharacterized protein 139L">
    <location>
        <begin position="23"/>
        <end position="65"/>
    </location>
</feature>
<keyword id="KW-1185">Reference proteome</keyword>
<keyword id="KW-0732">Signal</keyword>
<organism>
    <name type="scientific">Invertebrate iridescent virus 6</name>
    <name type="common">IIV-6</name>
    <name type="synonym">Chilo iridescent virus</name>
    <dbReference type="NCBI Taxonomy" id="176652"/>
    <lineage>
        <taxon>Viruses</taxon>
        <taxon>Varidnaviria</taxon>
        <taxon>Bamfordvirae</taxon>
        <taxon>Nucleocytoviricota</taxon>
        <taxon>Megaviricetes</taxon>
        <taxon>Pimascovirales</taxon>
        <taxon>Iridoviridae</taxon>
        <taxon>Betairidovirinae</taxon>
        <taxon>Iridovirus</taxon>
    </lineage>
</organism>
<organismHost>
    <name type="scientific">Acheta domesticus</name>
    <name type="common">House cricket</name>
    <dbReference type="NCBI Taxonomy" id="6997"/>
</organismHost>
<organismHost>
    <name type="scientific">Chilo suppressalis</name>
    <name type="common">Asiatic rice borer moth</name>
    <dbReference type="NCBI Taxonomy" id="168631"/>
</organismHost>
<organismHost>
    <name type="scientific">Gryllus bimaculatus</name>
    <name type="common">Two-spotted cricket</name>
    <dbReference type="NCBI Taxonomy" id="6999"/>
</organismHost>
<organismHost>
    <name type="scientific">Gryllus campestris</name>
    <dbReference type="NCBI Taxonomy" id="58607"/>
</organismHost>
<organismHost>
    <name type="scientific">Spodoptera frugiperda</name>
    <name type="common">Fall armyworm</name>
    <dbReference type="NCBI Taxonomy" id="7108"/>
</organismHost>
<proteinExistence type="inferred from homology"/>
<name>139L_IIV6</name>
<gene>
    <name type="ORF">IIV6-139L</name>
</gene>
<reference key="1">
    <citation type="journal article" date="2001" name="Virology">
        <title>Analysis of the first complete DNA sequence of an invertebrate iridovirus: coding strategy of the genome of Chilo iridescent virus.</title>
        <authorList>
            <person name="Jakob N.J."/>
            <person name="Mueller K."/>
            <person name="Bahr U."/>
            <person name="Darai G."/>
        </authorList>
    </citation>
    <scope>NUCLEOTIDE SEQUENCE [LARGE SCALE GENOMIC DNA]</scope>
</reference>
<reference key="2">
    <citation type="journal article" date="2007" name="Virol. J.">
        <title>Comparative genomic analysis of the family Iridoviridae: re-annotating and defining the core set of iridovirus genes.</title>
        <authorList>
            <person name="Eaton H.E."/>
            <person name="Metcalf J."/>
            <person name="Penny E."/>
            <person name="Tcherepanov V."/>
            <person name="Upton C."/>
            <person name="Brunetti C.R."/>
        </authorList>
    </citation>
    <scope>GENOME REANNOTATION</scope>
</reference>
<dbReference type="EMBL" id="AF303741">
    <property type="protein sequence ID" value="AAB94456.1"/>
    <property type="molecule type" value="Genomic_DNA"/>
</dbReference>
<dbReference type="PIR" id="T03082">
    <property type="entry name" value="T03082"/>
</dbReference>
<dbReference type="RefSeq" id="NP_149602.1">
    <property type="nucleotide sequence ID" value="NC_003038.1"/>
</dbReference>
<dbReference type="SMR" id="O55745"/>
<dbReference type="KEGG" id="vg:1733334"/>
<dbReference type="Proteomes" id="UP000001359">
    <property type="component" value="Genome"/>
</dbReference>
<accession>O55745</accession>
<evidence type="ECO:0000255" key="1"/>